<name>OTSA_MYCSJ</name>
<keyword id="KW-0328">Glycosyltransferase</keyword>
<keyword id="KW-0808">Transferase</keyword>
<organism>
    <name type="scientific">Mycobacterium sp. (strain JLS)</name>
    <dbReference type="NCBI Taxonomy" id="164757"/>
    <lineage>
        <taxon>Bacteria</taxon>
        <taxon>Bacillati</taxon>
        <taxon>Actinomycetota</taxon>
        <taxon>Actinomycetes</taxon>
        <taxon>Mycobacteriales</taxon>
        <taxon>Mycobacteriaceae</taxon>
        <taxon>Mycobacterium</taxon>
    </lineage>
</organism>
<sequence length="483" mass="54203">MAPEGDQRVGSGDSDFVVVANRLPIDMERLPDGSTSIKRSPGGLVTALEPLLRKRRGAWIGWAGIPDSPEDPIEEDGLQLYPVALSADDVADYYEGFSNATLWPLYHDLIVKPIYHRKWWDRYVEVNRRFAEATARAAAQGATVWVQDYQLQLVPKMLRMLRPDLTIGFFLHIPFPPVELFMQMPWRTEIIEGLLGADLVGFHLPGGAQNFLYLSRRLTGANTSRASVGVRSRFGEVQVGFRTVKVGAFPISIDSAELDSKARNRSVRQRAREIRNELGNPRKILLGVDRLDYTKGINVRLEAFSELLEDGRVDRNDTVLIQLATPSRERVESYIAMREDIERQVGHINGEFGDVGHPIVHYLHRPVPRDELIAFFVAADVMLVTPLRDGMNLVAKEYVACRSDLGGALVLSEFTGAAAELRQAYLANPHHLEGVKDAIEAALNQDPEEGRRRMRALRRQVLAHDVDRWARAFLDALADTKSA</sequence>
<gene>
    <name evidence="2" type="primary">otsA</name>
    <name type="ordered locus">Mjls_4992</name>
</gene>
<evidence type="ECO:0000250" key="1">
    <source>
        <dbReference type="UniProtKB" id="P31677"/>
    </source>
</evidence>
<evidence type="ECO:0000250" key="2">
    <source>
        <dbReference type="UniProtKB" id="P9WN11"/>
    </source>
</evidence>
<accession>A3Q6H9</accession>
<protein>
    <recommendedName>
        <fullName evidence="2">Trehalose-6-phosphate synthase</fullName>
        <shortName evidence="2">TPS</shortName>
        <ecNumber evidence="2">2.4.1.15</ecNumber>
        <ecNumber evidence="2">2.4.1.347</ecNumber>
    </recommendedName>
    <alternativeName>
        <fullName evidence="2">Alpha,alpha-trehalose-phosphate synthase [UDP-forming]</fullName>
    </alternativeName>
    <alternativeName>
        <fullName evidence="1">Osmoregulatory trehalose synthesis protein A</fullName>
        <shortName evidence="1">OtsA</shortName>
    </alternativeName>
</protein>
<proteinExistence type="inferred from homology"/>
<reference key="1">
    <citation type="submission" date="2007-02" db="EMBL/GenBank/DDBJ databases">
        <title>Complete sequence of Mycobacterium sp. JLS.</title>
        <authorList>
            <consortium name="US DOE Joint Genome Institute"/>
            <person name="Copeland A."/>
            <person name="Lucas S."/>
            <person name="Lapidus A."/>
            <person name="Barry K."/>
            <person name="Detter J.C."/>
            <person name="Glavina del Rio T."/>
            <person name="Hammon N."/>
            <person name="Israni S."/>
            <person name="Dalin E."/>
            <person name="Tice H."/>
            <person name="Pitluck S."/>
            <person name="Chain P."/>
            <person name="Malfatti S."/>
            <person name="Shin M."/>
            <person name="Vergez L."/>
            <person name="Schmutz J."/>
            <person name="Larimer F."/>
            <person name="Land M."/>
            <person name="Hauser L."/>
            <person name="Kyrpides N."/>
            <person name="Mikhailova N."/>
            <person name="Miller C.D."/>
            <person name="Anderson A.J."/>
            <person name="Sims R.C."/>
            <person name="Richardson P."/>
        </authorList>
    </citation>
    <scope>NUCLEOTIDE SEQUENCE [LARGE SCALE GENOMIC DNA]</scope>
    <source>
        <strain>JLS</strain>
    </source>
</reference>
<feature type="chain" id="PRO_0000348911" description="Trehalose-6-phosphate synthase">
    <location>
        <begin position="1"/>
        <end position="483"/>
    </location>
</feature>
<feature type="binding site" evidence="1">
    <location>
        <position position="22"/>
    </location>
    <ligand>
        <name>D-glucose 6-phosphate</name>
        <dbReference type="ChEBI" id="CHEBI:61548"/>
    </ligand>
</feature>
<feature type="binding site" evidence="1">
    <location>
        <begin position="42"/>
        <end position="43"/>
    </location>
    <ligand>
        <name>UDP-alpha-D-glucose</name>
        <dbReference type="ChEBI" id="CHEBI:58885"/>
    </ligand>
</feature>
<feature type="binding site" evidence="1">
    <location>
        <position position="94"/>
    </location>
    <ligand>
        <name>D-glucose 6-phosphate</name>
        <dbReference type="ChEBI" id="CHEBI:61548"/>
    </ligand>
</feature>
<feature type="binding site" evidence="1">
    <location>
        <position position="148"/>
    </location>
    <ligand>
        <name>D-glucose 6-phosphate</name>
        <dbReference type="ChEBI" id="CHEBI:61548"/>
    </ligand>
</feature>
<feature type="binding site" evidence="1">
    <location>
        <position position="290"/>
    </location>
    <ligand>
        <name>UDP-alpha-D-glucose</name>
        <dbReference type="ChEBI" id="CHEBI:58885"/>
    </ligand>
</feature>
<feature type="binding site" evidence="1">
    <location>
        <position position="295"/>
    </location>
    <ligand>
        <name>UDP-alpha-D-glucose</name>
        <dbReference type="ChEBI" id="CHEBI:58885"/>
    </ligand>
</feature>
<feature type="binding site" evidence="1">
    <location>
        <position position="328"/>
    </location>
    <ligand>
        <name>D-glucose 6-phosphate</name>
        <dbReference type="ChEBI" id="CHEBI:61548"/>
    </ligand>
</feature>
<feature type="binding site" evidence="1">
    <location>
        <begin position="393"/>
        <end position="397"/>
    </location>
    <ligand>
        <name>UDP-alpha-D-glucose</name>
        <dbReference type="ChEBI" id="CHEBI:58885"/>
    </ligand>
</feature>
<feature type="site" description="Involved in alpha anomer selectivity" evidence="1">
    <location>
        <position position="103"/>
    </location>
</feature>
<feature type="site" description="Involved in alpha anomer selectivity" evidence="1">
    <location>
        <position position="173"/>
    </location>
</feature>
<dbReference type="EC" id="2.4.1.15" evidence="2"/>
<dbReference type="EC" id="2.4.1.347" evidence="2"/>
<dbReference type="EMBL" id="CP000580">
    <property type="protein sequence ID" value="ABO00757.1"/>
    <property type="molecule type" value="Genomic_DNA"/>
</dbReference>
<dbReference type="SMR" id="A3Q6H9"/>
<dbReference type="CAZy" id="GT20">
    <property type="family name" value="Glycosyltransferase Family 20"/>
</dbReference>
<dbReference type="KEGG" id="mjl:Mjls_4992"/>
<dbReference type="HOGENOM" id="CLU_002351_7_1_11"/>
<dbReference type="BioCyc" id="MSP164757:G1G8C-5043-MONOMER"/>
<dbReference type="UniPathway" id="UPA00299"/>
<dbReference type="GO" id="GO:0005829">
    <property type="term" value="C:cytosol"/>
    <property type="evidence" value="ECO:0007669"/>
    <property type="project" value="TreeGrafter"/>
</dbReference>
<dbReference type="GO" id="GO:0047260">
    <property type="term" value="F:alpha,alpha-trehalose-phosphate synthase (GDP-forming) activity"/>
    <property type="evidence" value="ECO:0007669"/>
    <property type="project" value="RHEA"/>
</dbReference>
<dbReference type="GO" id="GO:0003825">
    <property type="term" value="F:alpha,alpha-trehalose-phosphate synthase (UDP-forming) activity"/>
    <property type="evidence" value="ECO:0007669"/>
    <property type="project" value="UniProtKB-EC"/>
</dbReference>
<dbReference type="GO" id="GO:0004805">
    <property type="term" value="F:trehalose-phosphatase activity"/>
    <property type="evidence" value="ECO:0007669"/>
    <property type="project" value="TreeGrafter"/>
</dbReference>
<dbReference type="GO" id="GO:0005992">
    <property type="term" value="P:trehalose biosynthetic process"/>
    <property type="evidence" value="ECO:0007669"/>
    <property type="project" value="UniProtKB-UniPathway"/>
</dbReference>
<dbReference type="CDD" id="cd03788">
    <property type="entry name" value="GT20_TPS"/>
    <property type="match status" value="1"/>
</dbReference>
<dbReference type="Gene3D" id="3.40.50.2000">
    <property type="entry name" value="Glycogen Phosphorylase B"/>
    <property type="match status" value="2"/>
</dbReference>
<dbReference type="InterPro" id="IPR001830">
    <property type="entry name" value="Glyco_trans_20"/>
</dbReference>
<dbReference type="PANTHER" id="PTHR10788:SF106">
    <property type="entry name" value="BCDNA.GH08860"/>
    <property type="match status" value="1"/>
</dbReference>
<dbReference type="PANTHER" id="PTHR10788">
    <property type="entry name" value="TREHALOSE-6-PHOSPHATE SYNTHASE"/>
    <property type="match status" value="1"/>
</dbReference>
<dbReference type="Pfam" id="PF00982">
    <property type="entry name" value="Glyco_transf_20"/>
    <property type="match status" value="1"/>
</dbReference>
<dbReference type="SUPFAM" id="SSF53756">
    <property type="entry name" value="UDP-Glycosyltransferase/glycogen phosphorylase"/>
    <property type="match status" value="1"/>
</dbReference>
<comment type="function">
    <text evidence="2">Probably involved in the osmoprotection via the biosynthesis of trehalose and in the production of glycogen and alpha-glucan via the TreS-Pep2 branch involved in the biosynthesis of maltose-1-phosphate (M1P). Catalyzes the transfer of glucose from UDP-glucose (UDP-Glc) to D-glucose 6-phosphate (Glc-6-P) to form trehalose-6-phosphate. Probably also able to use ADP-Glc, CDP-Glc, GDP-Glc and TDP-Glc as glucosyl donors.</text>
</comment>
<comment type="catalytic activity">
    <reaction evidence="2">
        <text>ADP-alpha-D-glucose + D-glucose 6-phosphate = alpha,alpha-trehalose 6-phosphate + ADP + H(+)</text>
        <dbReference type="Rhea" id="RHEA:53880"/>
        <dbReference type="ChEBI" id="CHEBI:15378"/>
        <dbReference type="ChEBI" id="CHEBI:57498"/>
        <dbReference type="ChEBI" id="CHEBI:58429"/>
        <dbReference type="ChEBI" id="CHEBI:61548"/>
        <dbReference type="ChEBI" id="CHEBI:456216"/>
        <dbReference type="EC" id="2.4.1.347"/>
    </reaction>
</comment>
<comment type="catalytic activity">
    <reaction evidence="2">
        <text>CDP-alpha-D-glucose + D-glucose 6-phosphate = alpha,alpha-trehalose 6-phosphate + CDP + H(+)</text>
        <dbReference type="Rhea" id="RHEA:53884"/>
        <dbReference type="ChEBI" id="CHEBI:15378"/>
        <dbReference type="ChEBI" id="CHEBI:58069"/>
        <dbReference type="ChEBI" id="CHEBI:58429"/>
        <dbReference type="ChEBI" id="CHEBI:61548"/>
        <dbReference type="ChEBI" id="CHEBI:137927"/>
    </reaction>
</comment>
<comment type="catalytic activity">
    <reaction evidence="2">
        <text>GDP-alpha-D-glucose + D-glucose 6-phosphate = alpha,alpha-trehalose 6-phosphate + GDP + H(+)</text>
        <dbReference type="Rhea" id="RHEA:14605"/>
        <dbReference type="ChEBI" id="CHEBI:15378"/>
        <dbReference type="ChEBI" id="CHEBI:58189"/>
        <dbReference type="ChEBI" id="CHEBI:58429"/>
        <dbReference type="ChEBI" id="CHEBI:61548"/>
        <dbReference type="ChEBI" id="CHEBI:62230"/>
    </reaction>
</comment>
<comment type="catalytic activity">
    <reaction evidence="2">
        <text>TDP-alpha-D-glucose + D-glucose 6-phosphate = 5-methyl-UDP + alpha,alpha-trehalose 6-phosphate + H(+)</text>
        <dbReference type="Rhea" id="RHEA:53888"/>
        <dbReference type="ChEBI" id="CHEBI:15378"/>
        <dbReference type="ChEBI" id="CHEBI:58429"/>
        <dbReference type="ChEBI" id="CHEBI:61417"/>
        <dbReference type="ChEBI" id="CHEBI:61548"/>
        <dbReference type="ChEBI" id="CHEBI:137931"/>
    </reaction>
</comment>
<comment type="catalytic activity">
    <reaction evidence="2">
        <text>D-glucose 6-phosphate + UDP-alpha-D-glucose = alpha,alpha-trehalose 6-phosphate + UDP + H(+)</text>
        <dbReference type="Rhea" id="RHEA:18889"/>
        <dbReference type="ChEBI" id="CHEBI:15378"/>
        <dbReference type="ChEBI" id="CHEBI:58223"/>
        <dbReference type="ChEBI" id="CHEBI:58429"/>
        <dbReference type="ChEBI" id="CHEBI:58885"/>
        <dbReference type="ChEBI" id="CHEBI:61548"/>
        <dbReference type="EC" id="2.4.1.15"/>
    </reaction>
</comment>
<comment type="pathway">
    <text evidence="2">Glycan biosynthesis; trehalose biosynthesis.</text>
</comment>
<comment type="subunit">
    <text evidence="2">Homotetramer.</text>
</comment>
<comment type="similarity">
    <text evidence="2">Belongs to the glycosyltransferase 20 family.</text>
</comment>